<name>MURE_WIGBR</name>
<proteinExistence type="inferred from homology"/>
<protein>
    <recommendedName>
        <fullName evidence="1">UDP-N-acetylmuramoyl-L-alanyl-D-glutamate--2,6-diaminopimelate ligase</fullName>
        <ecNumber evidence="1">6.3.2.13</ecNumber>
    </recommendedName>
    <alternativeName>
        <fullName evidence="1">Meso-A2pm-adding enzyme</fullName>
    </alternativeName>
    <alternativeName>
        <fullName evidence="1">Meso-diaminopimelate-adding enzyme</fullName>
    </alternativeName>
    <alternativeName>
        <fullName evidence="1">UDP-MurNAc-L-Ala-D-Glu:meso-diaminopimelate ligase</fullName>
    </alternativeName>
    <alternativeName>
        <fullName evidence="1">UDP-MurNAc-tripeptide synthetase</fullName>
    </alternativeName>
    <alternativeName>
        <fullName evidence="1">UDP-N-acetylmuramyl-tripeptide synthetase</fullName>
    </alternativeName>
</protein>
<keyword id="KW-0067">ATP-binding</keyword>
<keyword id="KW-0131">Cell cycle</keyword>
<keyword id="KW-0132">Cell division</keyword>
<keyword id="KW-0133">Cell shape</keyword>
<keyword id="KW-0961">Cell wall biogenesis/degradation</keyword>
<keyword id="KW-0963">Cytoplasm</keyword>
<keyword id="KW-0436">Ligase</keyword>
<keyword id="KW-0460">Magnesium</keyword>
<keyword id="KW-0547">Nucleotide-binding</keyword>
<keyword id="KW-0573">Peptidoglycan synthesis</keyword>
<keyword id="KW-1185">Reference proteome</keyword>
<dbReference type="EC" id="6.3.2.13" evidence="1"/>
<dbReference type="EMBL" id="BA000021">
    <property type="protein sequence ID" value="BAC24357.1"/>
    <property type="molecule type" value="Genomic_DNA"/>
</dbReference>
<dbReference type="SMR" id="Q8D2Z1"/>
<dbReference type="STRING" id="36870.gene:10368699"/>
<dbReference type="KEGG" id="wbr:murE"/>
<dbReference type="eggNOG" id="COG0769">
    <property type="taxonomic scope" value="Bacteria"/>
</dbReference>
<dbReference type="HOGENOM" id="CLU_022291_3_2_6"/>
<dbReference type="OrthoDB" id="9800958at2"/>
<dbReference type="UniPathway" id="UPA00219"/>
<dbReference type="Proteomes" id="UP000000562">
    <property type="component" value="Chromosome"/>
</dbReference>
<dbReference type="GO" id="GO:0005737">
    <property type="term" value="C:cytoplasm"/>
    <property type="evidence" value="ECO:0007669"/>
    <property type="project" value="UniProtKB-SubCell"/>
</dbReference>
<dbReference type="GO" id="GO:0005524">
    <property type="term" value="F:ATP binding"/>
    <property type="evidence" value="ECO:0007669"/>
    <property type="project" value="UniProtKB-UniRule"/>
</dbReference>
<dbReference type="GO" id="GO:0000287">
    <property type="term" value="F:magnesium ion binding"/>
    <property type="evidence" value="ECO:0007669"/>
    <property type="project" value="UniProtKB-UniRule"/>
</dbReference>
<dbReference type="GO" id="GO:0008765">
    <property type="term" value="F:UDP-N-acetylmuramoylalanyl-D-glutamate-2,6-diaminopimelate ligase activity"/>
    <property type="evidence" value="ECO:0007669"/>
    <property type="project" value="UniProtKB-UniRule"/>
</dbReference>
<dbReference type="GO" id="GO:0051301">
    <property type="term" value="P:cell division"/>
    <property type="evidence" value="ECO:0007669"/>
    <property type="project" value="UniProtKB-KW"/>
</dbReference>
<dbReference type="GO" id="GO:0071555">
    <property type="term" value="P:cell wall organization"/>
    <property type="evidence" value="ECO:0007669"/>
    <property type="project" value="UniProtKB-KW"/>
</dbReference>
<dbReference type="GO" id="GO:0009252">
    <property type="term" value="P:peptidoglycan biosynthetic process"/>
    <property type="evidence" value="ECO:0007669"/>
    <property type="project" value="UniProtKB-UniRule"/>
</dbReference>
<dbReference type="GO" id="GO:0008360">
    <property type="term" value="P:regulation of cell shape"/>
    <property type="evidence" value="ECO:0007669"/>
    <property type="project" value="UniProtKB-KW"/>
</dbReference>
<dbReference type="Gene3D" id="3.90.190.20">
    <property type="entry name" value="Mur ligase, C-terminal domain"/>
    <property type="match status" value="1"/>
</dbReference>
<dbReference type="Gene3D" id="3.40.1190.10">
    <property type="entry name" value="Mur-like, catalytic domain"/>
    <property type="match status" value="1"/>
</dbReference>
<dbReference type="Gene3D" id="3.40.1390.10">
    <property type="entry name" value="MurE/MurF, N-terminal domain"/>
    <property type="match status" value="1"/>
</dbReference>
<dbReference type="HAMAP" id="MF_00208">
    <property type="entry name" value="MurE"/>
    <property type="match status" value="1"/>
</dbReference>
<dbReference type="InterPro" id="IPR036565">
    <property type="entry name" value="Mur-like_cat_sf"/>
</dbReference>
<dbReference type="InterPro" id="IPR004101">
    <property type="entry name" value="Mur_ligase_C"/>
</dbReference>
<dbReference type="InterPro" id="IPR036615">
    <property type="entry name" value="Mur_ligase_C_dom_sf"/>
</dbReference>
<dbReference type="InterPro" id="IPR013221">
    <property type="entry name" value="Mur_ligase_cen"/>
</dbReference>
<dbReference type="InterPro" id="IPR035911">
    <property type="entry name" value="MurE/MurF_N"/>
</dbReference>
<dbReference type="InterPro" id="IPR005761">
    <property type="entry name" value="UDP-N-AcMur-Glu-dNH2Pim_ligase"/>
</dbReference>
<dbReference type="NCBIfam" id="TIGR01085">
    <property type="entry name" value="murE"/>
    <property type="match status" value="1"/>
</dbReference>
<dbReference type="NCBIfam" id="NF001126">
    <property type="entry name" value="PRK00139.1-4"/>
    <property type="match status" value="1"/>
</dbReference>
<dbReference type="PANTHER" id="PTHR23135">
    <property type="entry name" value="MUR LIGASE FAMILY MEMBER"/>
    <property type="match status" value="1"/>
</dbReference>
<dbReference type="PANTHER" id="PTHR23135:SF4">
    <property type="entry name" value="UDP-N-ACETYLMURAMOYL-L-ALANYL-D-GLUTAMATE--2,6-DIAMINOPIMELATE LIGASE MURE HOMOLOG, CHLOROPLASTIC"/>
    <property type="match status" value="1"/>
</dbReference>
<dbReference type="Pfam" id="PF02875">
    <property type="entry name" value="Mur_ligase_C"/>
    <property type="match status" value="1"/>
</dbReference>
<dbReference type="Pfam" id="PF08245">
    <property type="entry name" value="Mur_ligase_M"/>
    <property type="match status" value="1"/>
</dbReference>
<dbReference type="SUPFAM" id="SSF53623">
    <property type="entry name" value="MurD-like peptide ligases, catalytic domain"/>
    <property type="match status" value="1"/>
</dbReference>
<dbReference type="SUPFAM" id="SSF53244">
    <property type="entry name" value="MurD-like peptide ligases, peptide-binding domain"/>
    <property type="match status" value="1"/>
</dbReference>
<dbReference type="SUPFAM" id="SSF63418">
    <property type="entry name" value="MurE/MurF N-terminal domain"/>
    <property type="match status" value="1"/>
</dbReference>
<reference key="1">
    <citation type="journal article" date="2002" name="Nat. Genet.">
        <title>Genome sequence of the endocellular obligate symbiont of tsetse flies, Wigglesworthia glossinidia.</title>
        <authorList>
            <person name="Akman L."/>
            <person name="Yamashita A."/>
            <person name="Watanabe H."/>
            <person name="Oshima K."/>
            <person name="Shiba T."/>
            <person name="Hattori M."/>
            <person name="Aksoy S."/>
        </authorList>
    </citation>
    <scope>NUCLEOTIDE SEQUENCE [LARGE SCALE GENOMIC DNA]</scope>
</reference>
<comment type="function">
    <text evidence="1">Catalyzes the addition of meso-diaminopimelic acid to the nucleotide precursor UDP-N-acetylmuramoyl-L-alanyl-D-glutamate (UMAG) in the biosynthesis of bacterial cell-wall peptidoglycan.</text>
</comment>
<comment type="catalytic activity">
    <reaction evidence="1">
        <text>UDP-N-acetyl-alpha-D-muramoyl-L-alanyl-D-glutamate + meso-2,6-diaminopimelate + ATP = UDP-N-acetyl-alpha-D-muramoyl-L-alanyl-gamma-D-glutamyl-meso-2,6-diaminopimelate + ADP + phosphate + H(+)</text>
        <dbReference type="Rhea" id="RHEA:23676"/>
        <dbReference type="ChEBI" id="CHEBI:15378"/>
        <dbReference type="ChEBI" id="CHEBI:30616"/>
        <dbReference type="ChEBI" id="CHEBI:43474"/>
        <dbReference type="ChEBI" id="CHEBI:57791"/>
        <dbReference type="ChEBI" id="CHEBI:83900"/>
        <dbReference type="ChEBI" id="CHEBI:83905"/>
        <dbReference type="ChEBI" id="CHEBI:456216"/>
        <dbReference type="EC" id="6.3.2.13"/>
    </reaction>
</comment>
<comment type="cofactor">
    <cofactor evidence="1">
        <name>Mg(2+)</name>
        <dbReference type="ChEBI" id="CHEBI:18420"/>
    </cofactor>
</comment>
<comment type="pathway">
    <text evidence="1">Cell wall biogenesis; peptidoglycan biosynthesis.</text>
</comment>
<comment type="subcellular location">
    <subcellularLocation>
        <location evidence="1">Cytoplasm</location>
    </subcellularLocation>
</comment>
<comment type="PTM">
    <text evidence="1">Carboxylation is probably crucial for Mg(2+) binding and, consequently, for the gamma-phosphate positioning of ATP.</text>
</comment>
<comment type="similarity">
    <text evidence="1">Belongs to the MurCDEF family. MurE subfamily.</text>
</comment>
<sequence length="496" mass="57220">MIKIINLKKFLFPWISTDISKIKLNSIKLNSKKIIKNDIFIALYGNCNHGKNFIFEAIKNGSSIILIETKNILKHGIIYFIKNIPIIYFYNLNYSLSELSGKFYLHPSRYMNVIGITGTNGKTTISHFIAKWLFLLGEKIGIIGTLGYGCLNKMKKSKNTTNSAIKCQKLLNFFLKKNINTVVMEVSSHGLHQNRVNNINFFSAIFSNLSQDHIDYHKNMMQYEQSKWKLFSKLNVYKYIINYDDVIGKNWIKKIPNSIIVSTKKNSIKKFKNLKMYVKDIFFHYFGTKLSISSSWGSCVINTKIFGEFNINNLLLSFVALLTLGYNFKSLANVAENLTMPNGRMKIFYVKKIPRVIVDYAHTPDALEKVLSAIKLHFKKNIWSIFGCGGDRDKSKRRVMGKICDLYSINIILTNDNPRSESETKIFNDIKIGIKNLNKVNIIPSREHAIKFAIDNSNEKDIVLILGKGHEEHQVFKYKKVFFSDQILVNKILYKT</sequence>
<organism>
    <name type="scientific">Wigglesworthia glossinidia brevipalpis</name>
    <dbReference type="NCBI Taxonomy" id="36870"/>
    <lineage>
        <taxon>Bacteria</taxon>
        <taxon>Pseudomonadati</taxon>
        <taxon>Pseudomonadota</taxon>
        <taxon>Gammaproteobacteria</taxon>
        <taxon>Enterobacterales</taxon>
        <taxon>Erwiniaceae</taxon>
        <taxon>Wigglesworthia</taxon>
    </lineage>
</organism>
<gene>
    <name evidence="1" type="primary">murE</name>
    <name type="ordered locus">WIGBR2110</name>
</gene>
<feature type="chain" id="PRO_0000101971" description="UDP-N-acetylmuramoyl-L-alanyl-D-glutamate--2,6-diaminopimelate ligase">
    <location>
        <begin position="1"/>
        <end position="496"/>
    </location>
</feature>
<feature type="short sequence motif" description="Meso-diaminopimelate recognition motif">
    <location>
        <begin position="416"/>
        <end position="419"/>
    </location>
</feature>
<feature type="binding site" evidence="1">
    <location>
        <position position="29"/>
    </location>
    <ligand>
        <name>UDP-N-acetyl-alpha-D-muramoyl-L-alanyl-D-glutamate</name>
        <dbReference type="ChEBI" id="CHEBI:83900"/>
    </ligand>
</feature>
<feature type="binding site" evidence="1">
    <location>
        <position position="31"/>
    </location>
    <ligand>
        <name>UDP-N-acetyl-alpha-D-muramoyl-L-alanyl-D-glutamate</name>
        <dbReference type="ChEBI" id="CHEBI:83900"/>
    </ligand>
</feature>
<feature type="binding site" evidence="1">
    <location>
        <begin position="118"/>
        <end position="124"/>
    </location>
    <ligand>
        <name>ATP</name>
        <dbReference type="ChEBI" id="CHEBI:30616"/>
    </ligand>
</feature>
<feature type="binding site" evidence="1">
    <location>
        <position position="159"/>
    </location>
    <ligand>
        <name>UDP-N-acetyl-alpha-D-muramoyl-L-alanyl-D-glutamate</name>
        <dbReference type="ChEBI" id="CHEBI:83900"/>
    </ligand>
</feature>
<feature type="binding site" evidence="1">
    <location>
        <begin position="160"/>
        <end position="161"/>
    </location>
    <ligand>
        <name>UDP-N-acetyl-alpha-D-muramoyl-L-alanyl-D-glutamate</name>
        <dbReference type="ChEBI" id="CHEBI:83900"/>
    </ligand>
</feature>
<feature type="binding site" evidence="1">
    <location>
        <position position="187"/>
    </location>
    <ligand>
        <name>UDP-N-acetyl-alpha-D-muramoyl-L-alanyl-D-glutamate</name>
        <dbReference type="ChEBI" id="CHEBI:83900"/>
    </ligand>
</feature>
<feature type="binding site" evidence="1">
    <location>
        <position position="193"/>
    </location>
    <ligand>
        <name>UDP-N-acetyl-alpha-D-muramoyl-L-alanyl-D-glutamate</name>
        <dbReference type="ChEBI" id="CHEBI:83900"/>
    </ligand>
</feature>
<feature type="binding site" evidence="1">
    <location>
        <position position="195"/>
    </location>
    <ligand>
        <name>UDP-N-acetyl-alpha-D-muramoyl-L-alanyl-D-glutamate</name>
        <dbReference type="ChEBI" id="CHEBI:83900"/>
    </ligand>
</feature>
<feature type="binding site" evidence="1">
    <location>
        <position position="392"/>
    </location>
    <ligand>
        <name>meso-2,6-diaminopimelate</name>
        <dbReference type="ChEBI" id="CHEBI:57791"/>
    </ligand>
</feature>
<feature type="binding site" evidence="1">
    <location>
        <begin position="416"/>
        <end position="419"/>
    </location>
    <ligand>
        <name>meso-2,6-diaminopimelate</name>
        <dbReference type="ChEBI" id="CHEBI:57791"/>
    </ligand>
</feature>
<feature type="binding site" evidence="1">
    <location>
        <position position="467"/>
    </location>
    <ligand>
        <name>meso-2,6-diaminopimelate</name>
        <dbReference type="ChEBI" id="CHEBI:57791"/>
    </ligand>
</feature>
<feature type="binding site" evidence="1">
    <location>
        <position position="471"/>
    </location>
    <ligand>
        <name>meso-2,6-diaminopimelate</name>
        <dbReference type="ChEBI" id="CHEBI:57791"/>
    </ligand>
</feature>
<feature type="modified residue" description="N6-carboxylysine" evidence="1">
    <location>
        <position position="227"/>
    </location>
</feature>
<evidence type="ECO:0000255" key="1">
    <source>
        <dbReference type="HAMAP-Rule" id="MF_00208"/>
    </source>
</evidence>
<accession>Q8D2Z1</accession>